<dbReference type="EC" id="6.3.2.9" evidence="1"/>
<dbReference type="EMBL" id="CP000414">
    <property type="protein sequence ID" value="ABJ62588.1"/>
    <property type="molecule type" value="Genomic_DNA"/>
</dbReference>
<dbReference type="RefSeq" id="WP_011680171.1">
    <property type="nucleotide sequence ID" value="NC_008531.1"/>
</dbReference>
<dbReference type="SMR" id="Q03W34"/>
<dbReference type="EnsemblBacteria" id="ABJ62588">
    <property type="protein sequence ID" value="ABJ62588"/>
    <property type="gene ID" value="LEUM_1496"/>
</dbReference>
<dbReference type="GeneID" id="29577161"/>
<dbReference type="KEGG" id="lme:LEUM_1496"/>
<dbReference type="eggNOG" id="COG0771">
    <property type="taxonomic scope" value="Bacteria"/>
</dbReference>
<dbReference type="HOGENOM" id="CLU_032540_0_1_9"/>
<dbReference type="UniPathway" id="UPA00219"/>
<dbReference type="Proteomes" id="UP000000362">
    <property type="component" value="Chromosome"/>
</dbReference>
<dbReference type="GO" id="GO:0005737">
    <property type="term" value="C:cytoplasm"/>
    <property type="evidence" value="ECO:0007669"/>
    <property type="project" value="UniProtKB-SubCell"/>
</dbReference>
<dbReference type="GO" id="GO:0005524">
    <property type="term" value="F:ATP binding"/>
    <property type="evidence" value="ECO:0007669"/>
    <property type="project" value="UniProtKB-UniRule"/>
</dbReference>
<dbReference type="GO" id="GO:0008764">
    <property type="term" value="F:UDP-N-acetylmuramoylalanine-D-glutamate ligase activity"/>
    <property type="evidence" value="ECO:0007669"/>
    <property type="project" value="UniProtKB-UniRule"/>
</dbReference>
<dbReference type="GO" id="GO:0051301">
    <property type="term" value="P:cell division"/>
    <property type="evidence" value="ECO:0007669"/>
    <property type="project" value="UniProtKB-KW"/>
</dbReference>
<dbReference type="GO" id="GO:0071555">
    <property type="term" value="P:cell wall organization"/>
    <property type="evidence" value="ECO:0007669"/>
    <property type="project" value="UniProtKB-KW"/>
</dbReference>
<dbReference type="GO" id="GO:0009252">
    <property type="term" value="P:peptidoglycan biosynthetic process"/>
    <property type="evidence" value="ECO:0007669"/>
    <property type="project" value="UniProtKB-UniRule"/>
</dbReference>
<dbReference type="GO" id="GO:0008360">
    <property type="term" value="P:regulation of cell shape"/>
    <property type="evidence" value="ECO:0007669"/>
    <property type="project" value="UniProtKB-KW"/>
</dbReference>
<dbReference type="Gene3D" id="3.90.190.20">
    <property type="entry name" value="Mur ligase, C-terminal domain"/>
    <property type="match status" value="1"/>
</dbReference>
<dbReference type="Gene3D" id="3.40.1190.10">
    <property type="entry name" value="Mur-like, catalytic domain"/>
    <property type="match status" value="1"/>
</dbReference>
<dbReference type="Gene3D" id="3.40.50.720">
    <property type="entry name" value="NAD(P)-binding Rossmann-like Domain"/>
    <property type="match status" value="1"/>
</dbReference>
<dbReference type="HAMAP" id="MF_00639">
    <property type="entry name" value="MurD"/>
    <property type="match status" value="1"/>
</dbReference>
<dbReference type="InterPro" id="IPR036565">
    <property type="entry name" value="Mur-like_cat_sf"/>
</dbReference>
<dbReference type="InterPro" id="IPR004101">
    <property type="entry name" value="Mur_ligase_C"/>
</dbReference>
<dbReference type="InterPro" id="IPR036615">
    <property type="entry name" value="Mur_ligase_C_dom_sf"/>
</dbReference>
<dbReference type="InterPro" id="IPR013221">
    <property type="entry name" value="Mur_ligase_cen"/>
</dbReference>
<dbReference type="InterPro" id="IPR005762">
    <property type="entry name" value="MurD"/>
</dbReference>
<dbReference type="NCBIfam" id="TIGR01087">
    <property type="entry name" value="murD"/>
    <property type="match status" value="1"/>
</dbReference>
<dbReference type="PANTHER" id="PTHR43692">
    <property type="entry name" value="UDP-N-ACETYLMURAMOYLALANINE--D-GLUTAMATE LIGASE"/>
    <property type="match status" value="1"/>
</dbReference>
<dbReference type="PANTHER" id="PTHR43692:SF1">
    <property type="entry name" value="UDP-N-ACETYLMURAMOYLALANINE--D-GLUTAMATE LIGASE"/>
    <property type="match status" value="1"/>
</dbReference>
<dbReference type="Pfam" id="PF02875">
    <property type="entry name" value="Mur_ligase_C"/>
    <property type="match status" value="1"/>
</dbReference>
<dbReference type="Pfam" id="PF08245">
    <property type="entry name" value="Mur_ligase_M"/>
    <property type="match status" value="1"/>
</dbReference>
<dbReference type="SUPFAM" id="SSF51984">
    <property type="entry name" value="MurCD N-terminal domain"/>
    <property type="match status" value="1"/>
</dbReference>
<dbReference type="SUPFAM" id="SSF53623">
    <property type="entry name" value="MurD-like peptide ligases, catalytic domain"/>
    <property type="match status" value="1"/>
</dbReference>
<dbReference type="SUPFAM" id="SSF53244">
    <property type="entry name" value="MurD-like peptide ligases, peptide-binding domain"/>
    <property type="match status" value="1"/>
</dbReference>
<gene>
    <name evidence="1" type="primary">murD</name>
    <name type="ordered locus">LEUM_1496</name>
</gene>
<comment type="function">
    <text evidence="1">Cell wall formation. Catalyzes the addition of glutamate to the nucleotide precursor UDP-N-acetylmuramoyl-L-alanine (UMA).</text>
</comment>
<comment type="catalytic activity">
    <reaction evidence="1">
        <text>UDP-N-acetyl-alpha-D-muramoyl-L-alanine + D-glutamate + ATP = UDP-N-acetyl-alpha-D-muramoyl-L-alanyl-D-glutamate + ADP + phosphate + H(+)</text>
        <dbReference type="Rhea" id="RHEA:16429"/>
        <dbReference type="ChEBI" id="CHEBI:15378"/>
        <dbReference type="ChEBI" id="CHEBI:29986"/>
        <dbReference type="ChEBI" id="CHEBI:30616"/>
        <dbReference type="ChEBI" id="CHEBI:43474"/>
        <dbReference type="ChEBI" id="CHEBI:83898"/>
        <dbReference type="ChEBI" id="CHEBI:83900"/>
        <dbReference type="ChEBI" id="CHEBI:456216"/>
        <dbReference type="EC" id="6.3.2.9"/>
    </reaction>
</comment>
<comment type="pathway">
    <text evidence="1">Cell wall biogenesis; peptidoglycan biosynthesis.</text>
</comment>
<comment type="subcellular location">
    <subcellularLocation>
        <location evidence="1">Cytoplasm</location>
    </subcellularLocation>
</comment>
<comment type="similarity">
    <text evidence="1">Belongs to the MurCDEF family.</text>
</comment>
<keyword id="KW-0067">ATP-binding</keyword>
<keyword id="KW-0131">Cell cycle</keyword>
<keyword id="KW-0132">Cell division</keyword>
<keyword id="KW-0133">Cell shape</keyword>
<keyword id="KW-0961">Cell wall biogenesis/degradation</keyword>
<keyword id="KW-0963">Cytoplasm</keyword>
<keyword id="KW-0436">Ligase</keyword>
<keyword id="KW-0547">Nucleotide-binding</keyword>
<keyword id="KW-0573">Peptidoglycan synthesis</keyword>
<keyword id="KW-1185">Reference proteome</keyword>
<protein>
    <recommendedName>
        <fullName evidence="1">UDP-N-acetylmuramoylalanine--D-glutamate ligase</fullName>
        <ecNumber evidence="1">6.3.2.9</ecNumber>
    </recommendedName>
    <alternativeName>
        <fullName evidence="1">D-glutamic acid-adding enzyme</fullName>
    </alternativeName>
    <alternativeName>
        <fullName evidence="1">UDP-N-acetylmuramoyl-L-alanyl-D-glutamate synthetase</fullName>
    </alternativeName>
</protein>
<organism>
    <name type="scientific">Leuconostoc mesenteroides subsp. mesenteroides (strain ATCC 8293 / DSM 20343 / BCRC 11652 / CCM 1803 / JCM 6124 / NCDO 523 / NBRC 100496 / NCIMB 8023 / NCTC 12954 / NRRL B-1118 / 37Y)</name>
    <dbReference type="NCBI Taxonomy" id="203120"/>
    <lineage>
        <taxon>Bacteria</taxon>
        <taxon>Bacillati</taxon>
        <taxon>Bacillota</taxon>
        <taxon>Bacilli</taxon>
        <taxon>Lactobacillales</taxon>
        <taxon>Lactobacillaceae</taxon>
        <taxon>Leuconostoc</taxon>
    </lineage>
</organism>
<accession>Q03W34</accession>
<reference key="1">
    <citation type="journal article" date="2006" name="Proc. Natl. Acad. Sci. U.S.A.">
        <title>Comparative genomics of the lactic acid bacteria.</title>
        <authorList>
            <person name="Makarova K.S."/>
            <person name="Slesarev A."/>
            <person name="Wolf Y.I."/>
            <person name="Sorokin A."/>
            <person name="Mirkin B."/>
            <person name="Koonin E.V."/>
            <person name="Pavlov A."/>
            <person name="Pavlova N."/>
            <person name="Karamychev V."/>
            <person name="Polouchine N."/>
            <person name="Shakhova V."/>
            <person name="Grigoriev I."/>
            <person name="Lou Y."/>
            <person name="Rohksar D."/>
            <person name="Lucas S."/>
            <person name="Huang K."/>
            <person name="Goodstein D.M."/>
            <person name="Hawkins T."/>
            <person name="Plengvidhya V."/>
            <person name="Welker D."/>
            <person name="Hughes J."/>
            <person name="Goh Y."/>
            <person name="Benson A."/>
            <person name="Baldwin K."/>
            <person name="Lee J.-H."/>
            <person name="Diaz-Muniz I."/>
            <person name="Dosti B."/>
            <person name="Smeianov V."/>
            <person name="Wechter W."/>
            <person name="Barabote R."/>
            <person name="Lorca G."/>
            <person name="Altermann E."/>
            <person name="Barrangou R."/>
            <person name="Ganesan B."/>
            <person name="Xie Y."/>
            <person name="Rawsthorne H."/>
            <person name="Tamir D."/>
            <person name="Parker C."/>
            <person name="Breidt F."/>
            <person name="Broadbent J.R."/>
            <person name="Hutkins R."/>
            <person name="O'Sullivan D."/>
            <person name="Steele J."/>
            <person name="Unlu G."/>
            <person name="Saier M.H. Jr."/>
            <person name="Klaenhammer T."/>
            <person name="Richardson P."/>
            <person name="Kozyavkin S."/>
            <person name="Weimer B.C."/>
            <person name="Mills D.A."/>
        </authorList>
    </citation>
    <scope>NUCLEOTIDE SEQUENCE [LARGE SCALE GENOMIC DNA]</scope>
    <source>
        <strain>ATCC 8293 / DSM 20343 / BCRC 11652 / CCM 1803 / JCM 6124 / NCDO 523 / NBRC 100496 / NCIMB 8023 / NCTC 12954 / NRRL B-1118 / 37Y</strain>
    </source>
</reference>
<evidence type="ECO:0000255" key="1">
    <source>
        <dbReference type="HAMAP-Rule" id="MF_00639"/>
    </source>
</evidence>
<sequence length="449" mass="48892">MQATDFKNKKVMVFGWARSGKAAAQLLTKLGSKVTVVNGGEFDAQDATYRSLLAADVTLIGTDNAETLDSTYDYLIKNPGINYDHPLVQKAEKLNIPILTEVEIALSTFNGRLIAVTGSNGKTTTTSLIRDMLKADGQNVITAGNIGVPVSEVVFDLTREDTLLLELSSFQLLGLPDIQPDIALVTNIFSNHLDYHKTRANYVAAKFRITRHQNANQYLVLNADGQDTEKFKNETEAQVLEFSRTKQHFPVAFSNGNLTLTDEIVMPTKDIKLVGPHNQENILAAVTVANLAGVSKPAIREVLKTFSGVAHRLQYLFTAGDVKYYNDSKATDIEATQTALDSFDCPTIWIGGGLERGDDLERLLPNLKNVKAVIAVGETQQKIVTLAREAGKPVIAVTDVEHAAPVAVQLASPGDVVLLSPAQASWDQYSSFEERGDNFVASLKETLNS</sequence>
<proteinExistence type="inferred from homology"/>
<feature type="chain" id="PRO_1000130864" description="UDP-N-acetylmuramoylalanine--D-glutamate ligase">
    <location>
        <begin position="1"/>
        <end position="449"/>
    </location>
</feature>
<feature type="binding site" evidence="1">
    <location>
        <begin position="118"/>
        <end position="124"/>
    </location>
    <ligand>
        <name>ATP</name>
        <dbReference type="ChEBI" id="CHEBI:30616"/>
    </ligand>
</feature>
<name>MURD_LEUMM</name>